<feature type="chain" id="PRO_1000145905" description="DNA protection during starvation protein">
    <location>
        <begin position="1"/>
        <end position="167"/>
    </location>
</feature>
<feature type="binding site" evidence="1">
    <location>
        <position position="51"/>
    </location>
    <ligand>
        <name>Fe cation</name>
        <dbReference type="ChEBI" id="CHEBI:24875"/>
        <label>1</label>
        <note>ligand shared between two neighboring subunits</note>
    </ligand>
</feature>
<feature type="binding site" description="in other chain" evidence="1">
    <location>
        <position position="78"/>
    </location>
    <ligand>
        <name>Fe cation</name>
        <dbReference type="ChEBI" id="CHEBI:24875"/>
        <label>1</label>
        <note>ligand shared between two neighboring subunits</note>
    </ligand>
</feature>
<feature type="binding site" description="in other chain" evidence="1">
    <location>
        <position position="82"/>
    </location>
    <ligand>
        <name>Fe cation</name>
        <dbReference type="ChEBI" id="CHEBI:24875"/>
        <label>1</label>
        <note>ligand shared between two neighboring subunits</note>
    </ligand>
</feature>
<feature type="binding site" evidence="1">
    <location>
        <position position="82"/>
    </location>
    <ligand>
        <name>Fe cation</name>
        <dbReference type="ChEBI" id="CHEBI:24875"/>
        <label>2</label>
    </ligand>
</feature>
<comment type="function">
    <text evidence="1">During stationary phase, binds the chromosome non-specifically, forming a highly ordered and stable dps-DNA co-crystal within which chromosomal DNA is condensed and protected from diverse damages. It protects DNA from oxidative damage by sequestering intracellular Fe(2+) ion and storing it in the form of Fe(3+) oxyhydroxide mineral, which can be released after reduction. One hydrogen peroxide oxidizes two Fe(2+) ions, which prevents hydroxyl radical production by the Fenton reaction. Dps also protects the cell from UV and gamma irradiation, iron and copper toxicity, thermal stress and acid and base shocks. Also shows a weak catalase activity.</text>
</comment>
<comment type="catalytic activity">
    <reaction evidence="1">
        <text>2 Fe(2+) + H2O2 + 2 H(+) = 2 Fe(3+) + 2 H2O</text>
        <dbReference type="Rhea" id="RHEA:48712"/>
        <dbReference type="ChEBI" id="CHEBI:15377"/>
        <dbReference type="ChEBI" id="CHEBI:15378"/>
        <dbReference type="ChEBI" id="CHEBI:16240"/>
        <dbReference type="ChEBI" id="CHEBI:29033"/>
        <dbReference type="ChEBI" id="CHEBI:29034"/>
    </reaction>
</comment>
<comment type="subunit">
    <text evidence="1">Homododecamer. The 12 subunits form a hollow sphere into which the mineral iron core of up to 500 Fe(3+) can be deposited.</text>
</comment>
<comment type="subcellular location">
    <subcellularLocation>
        <location evidence="1">Cytoplasm</location>
        <location evidence="1">Nucleoid</location>
    </subcellularLocation>
</comment>
<comment type="similarity">
    <text evidence="1">Belongs to the Dps family.</text>
</comment>
<reference key="1">
    <citation type="journal article" date="2008" name="J. Bacteriol.">
        <title>Insights into the environmental resistance gene pool from the genome sequence of the multidrug-resistant environmental isolate Escherichia coli SMS-3-5.</title>
        <authorList>
            <person name="Fricke W.F."/>
            <person name="Wright M.S."/>
            <person name="Lindell A.H."/>
            <person name="Harkins D.M."/>
            <person name="Baker-Austin C."/>
            <person name="Ravel J."/>
            <person name="Stepanauskas R."/>
        </authorList>
    </citation>
    <scope>NUCLEOTIDE SEQUENCE [LARGE SCALE GENOMIC DNA]</scope>
    <source>
        <strain>SMS-3-5 / SECEC</strain>
    </source>
</reference>
<name>DPS_ECOSM</name>
<protein>
    <recommendedName>
        <fullName evidence="1">DNA protection during starvation protein</fullName>
        <ecNumber evidence="1">1.16.-.-</ecNumber>
    </recommendedName>
</protein>
<keyword id="KW-0963">Cytoplasm</keyword>
<keyword id="KW-0226">DNA condensation</keyword>
<keyword id="KW-0238">DNA-binding</keyword>
<keyword id="KW-0408">Iron</keyword>
<keyword id="KW-0409">Iron storage</keyword>
<keyword id="KW-0479">Metal-binding</keyword>
<keyword id="KW-0560">Oxidoreductase</keyword>
<gene>
    <name evidence="1" type="primary">dps</name>
    <name type="ordered locus">EcSMS35_0836</name>
</gene>
<accession>B1LMA4</accession>
<dbReference type="EC" id="1.16.-.-" evidence="1"/>
<dbReference type="EMBL" id="CP000970">
    <property type="protein sequence ID" value="ACB17903.1"/>
    <property type="molecule type" value="Genomic_DNA"/>
</dbReference>
<dbReference type="RefSeq" id="WP_000100800.1">
    <property type="nucleotide sequence ID" value="NC_010498.1"/>
</dbReference>
<dbReference type="SMR" id="B1LMA4"/>
<dbReference type="GeneID" id="93776616"/>
<dbReference type="KEGG" id="ecm:EcSMS35_0836"/>
<dbReference type="HOGENOM" id="CLU_098183_1_2_6"/>
<dbReference type="Proteomes" id="UP000007011">
    <property type="component" value="Chromosome"/>
</dbReference>
<dbReference type="GO" id="GO:0005737">
    <property type="term" value="C:cytoplasm"/>
    <property type="evidence" value="ECO:0007669"/>
    <property type="project" value="UniProtKB-UniRule"/>
</dbReference>
<dbReference type="GO" id="GO:0009295">
    <property type="term" value="C:nucleoid"/>
    <property type="evidence" value="ECO:0007669"/>
    <property type="project" value="UniProtKB-SubCell"/>
</dbReference>
<dbReference type="GO" id="GO:0003677">
    <property type="term" value="F:DNA binding"/>
    <property type="evidence" value="ECO:0007669"/>
    <property type="project" value="UniProtKB-UniRule"/>
</dbReference>
<dbReference type="GO" id="GO:0008199">
    <property type="term" value="F:ferric iron binding"/>
    <property type="evidence" value="ECO:0007669"/>
    <property type="project" value="UniProtKB-UniRule"/>
</dbReference>
<dbReference type="GO" id="GO:0016722">
    <property type="term" value="F:oxidoreductase activity, acting on metal ions"/>
    <property type="evidence" value="ECO:0007669"/>
    <property type="project" value="InterPro"/>
</dbReference>
<dbReference type="GO" id="GO:0030261">
    <property type="term" value="P:chromosome condensation"/>
    <property type="evidence" value="ECO:0007669"/>
    <property type="project" value="UniProtKB-KW"/>
</dbReference>
<dbReference type="GO" id="GO:0006879">
    <property type="term" value="P:intracellular iron ion homeostasis"/>
    <property type="evidence" value="ECO:0007669"/>
    <property type="project" value="UniProtKB-KW"/>
</dbReference>
<dbReference type="CDD" id="cd01043">
    <property type="entry name" value="DPS"/>
    <property type="match status" value="1"/>
</dbReference>
<dbReference type="FunFam" id="1.20.1260.10:FF:000003">
    <property type="entry name" value="DNA protection during starvation protein"/>
    <property type="match status" value="1"/>
</dbReference>
<dbReference type="Gene3D" id="1.20.1260.10">
    <property type="match status" value="1"/>
</dbReference>
<dbReference type="HAMAP" id="MF_01441">
    <property type="entry name" value="Dps"/>
    <property type="match status" value="1"/>
</dbReference>
<dbReference type="InterPro" id="IPR002177">
    <property type="entry name" value="DPS_DNA-bd"/>
</dbReference>
<dbReference type="InterPro" id="IPR023188">
    <property type="entry name" value="DPS_DNA-bd_CS"/>
</dbReference>
<dbReference type="InterPro" id="IPR023067">
    <property type="entry name" value="Dps_gammaproteobac"/>
</dbReference>
<dbReference type="InterPro" id="IPR012347">
    <property type="entry name" value="Ferritin-like"/>
</dbReference>
<dbReference type="InterPro" id="IPR009078">
    <property type="entry name" value="Ferritin-like_SF"/>
</dbReference>
<dbReference type="InterPro" id="IPR008331">
    <property type="entry name" value="Ferritin_DPS_dom"/>
</dbReference>
<dbReference type="NCBIfam" id="NF006975">
    <property type="entry name" value="PRK09448.1"/>
    <property type="match status" value="1"/>
</dbReference>
<dbReference type="PANTHER" id="PTHR42932:SF3">
    <property type="entry name" value="DNA PROTECTION DURING STARVATION PROTEIN"/>
    <property type="match status" value="1"/>
</dbReference>
<dbReference type="PANTHER" id="PTHR42932">
    <property type="entry name" value="GENERAL STRESS PROTEIN 20U"/>
    <property type="match status" value="1"/>
</dbReference>
<dbReference type="Pfam" id="PF00210">
    <property type="entry name" value="Ferritin"/>
    <property type="match status" value="1"/>
</dbReference>
<dbReference type="PIRSF" id="PIRSF005900">
    <property type="entry name" value="Dps"/>
    <property type="match status" value="1"/>
</dbReference>
<dbReference type="PRINTS" id="PR01346">
    <property type="entry name" value="HELNAPAPROT"/>
</dbReference>
<dbReference type="SUPFAM" id="SSF47240">
    <property type="entry name" value="Ferritin-like"/>
    <property type="match status" value="1"/>
</dbReference>
<dbReference type="PROSITE" id="PS00818">
    <property type="entry name" value="DPS_1"/>
    <property type="match status" value="1"/>
</dbReference>
<dbReference type="PROSITE" id="PS00819">
    <property type="entry name" value="DPS_2"/>
    <property type="match status" value="1"/>
</dbReference>
<organism>
    <name type="scientific">Escherichia coli (strain SMS-3-5 / SECEC)</name>
    <dbReference type="NCBI Taxonomy" id="439855"/>
    <lineage>
        <taxon>Bacteria</taxon>
        <taxon>Pseudomonadati</taxon>
        <taxon>Pseudomonadota</taxon>
        <taxon>Gammaproteobacteria</taxon>
        <taxon>Enterobacterales</taxon>
        <taxon>Enterobacteriaceae</taxon>
        <taxon>Escherichia</taxon>
    </lineage>
</organism>
<proteinExistence type="inferred from homology"/>
<sequence length="167" mass="18695">MSTAKLVKSKATNLLYTRNDVSDSEKKATVELLNRQVIQFIDLSLITKQAHWNMRGANFIAVHEMLDGFRTALIDHLDTMAERAVQLGGVALGTTQVINSKTPLKSYPLDIHNVQDHLKELADRYAIVANDVRKAIGEAKDDDTADILTAASRDLDKFLWFIESNIE</sequence>
<evidence type="ECO:0000255" key="1">
    <source>
        <dbReference type="HAMAP-Rule" id="MF_01441"/>
    </source>
</evidence>